<reference key="1">
    <citation type="journal article" date="1993" name="Ann. Mo. Bot. Gard.">
        <title>Phylogenetics of seed plants: an analysis of nucleotide sequences from the plastid gene rbcL.</title>
        <authorList>
            <person name="Chase M.W."/>
            <person name="Soltis D.E."/>
            <person name="Olmstead R.G."/>
            <person name="Morgan D."/>
            <person name="Les D.H."/>
            <person name="Mishler B.D."/>
            <person name="Duvall M.R."/>
            <person name="Price R.A."/>
            <person name="Hills H.G."/>
            <person name="Qiu Y.L."/>
            <person name="Kron K.A."/>
            <person name="Rettig J.H."/>
            <person name="Conti E."/>
            <person name="Palmer J.D."/>
            <person name="Manhart J.R."/>
            <person name="Sytsma K.J."/>
            <person name="Michaels H.J."/>
            <person name="Kress W.J."/>
            <person name="Karol K.G."/>
            <person name="Clark W.D."/>
            <person name="Hedroen M."/>
            <person name="Gaut B.S."/>
            <person name="Jansen R.K."/>
            <person name="Kim K.J."/>
            <person name="Wimpee C.F."/>
            <person name="Smith J.F."/>
            <person name="Furnier G.R."/>
            <person name="Strauss S.H."/>
            <person name="Xiang Q.-Y."/>
            <person name="Plunkett G.M."/>
            <person name="Soltis P.S."/>
            <person name="Swensen S."/>
            <person name="Williams S.E."/>
            <person name="Gadek P.A."/>
            <person name="Quinn C.J."/>
            <person name="Eguiarte L.E."/>
            <person name="Golenberg E."/>
            <person name="Learn G.H."/>
            <person name="Graham S.W."/>
            <person name="Barrett S.C.H."/>
            <person name="Dayanandan S."/>
            <person name="Albert V.A."/>
        </authorList>
        <dbReference type="AGRICOLA" id="IND93053807"/>
    </citation>
    <scope>NUCLEOTIDE SEQUENCE [GENOMIC DNA]</scope>
</reference>
<evidence type="ECO:0000250" key="1"/>
<evidence type="ECO:0000255" key="2">
    <source>
        <dbReference type="PROSITE-ProRule" id="PRU10114"/>
    </source>
</evidence>
<evidence type="ECO:0000305" key="3"/>
<proteinExistence type="inferred from homology"/>
<protein>
    <recommendedName>
        <fullName>Ribulose bisphosphate carboxylase large chain</fullName>
        <shortName>RuBisCO large subunit</shortName>
        <ecNumber>4.1.1.39</ecNumber>
    </recommendedName>
</protein>
<geneLocation type="chloroplast"/>
<sequence length="394" mass="43967">GVGFKAGVKDYKLTYYTPEYQTKDTDILAAFRVTPQPGVPPEEAGAAVAAESSTGTWTTVWTDGLTSLDRYKGRCYHIEPVIGEENQYFCYVAYPLDLFEEGSVTNMFTSIVGNVFGFKALRALRLEDLRIPPAYSKTFQGPPHGIQVERDKLNKYGRPLLGCTIKPKLGLSAKNYGRAVYECLRGGLDFTKDDENVNSQPFMRWRDRFLFCAEAIYKSQAETGEIKGHYLNATAGTCEEMIKRAVFARELGVPIVMHDYLTGGFTANTTLAAYCRDNGLLLHIHRAMHAVIDRQKNHGMHFRVLAKALRMSGGDHIHSGTVVGKLEGDRQLTLGFVDLLRDDYIEKDRSRGIFFTQDWVSMPGVLPVASGGIHVWHMPALTEIFGDDSVLQFG</sequence>
<name>RBL_ALIPL</name>
<comment type="function">
    <text evidence="1">RuBisCO catalyzes two reactions: the carboxylation of D-ribulose 1,5-bisphosphate, the primary event in carbon dioxide fixation, as well as the oxidative fragmentation of the pentose substrate in the photorespiration process. Both reactions occur simultaneously and in competition at the same active site (By similarity).</text>
</comment>
<comment type="catalytic activity">
    <reaction>
        <text>2 (2R)-3-phosphoglycerate + 2 H(+) = D-ribulose 1,5-bisphosphate + CO2 + H2O</text>
        <dbReference type="Rhea" id="RHEA:23124"/>
        <dbReference type="ChEBI" id="CHEBI:15377"/>
        <dbReference type="ChEBI" id="CHEBI:15378"/>
        <dbReference type="ChEBI" id="CHEBI:16526"/>
        <dbReference type="ChEBI" id="CHEBI:57870"/>
        <dbReference type="ChEBI" id="CHEBI:58272"/>
        <dbReference type="EC" id="4.1.1.39"/>
    </reaction>
</comment>
<comment type="catalytic activity">
    <reaction>
        <text>D-ribulose 1,5-bisphosphate + O2 = 2-phosphoglycolate + (2R)-3-phosphoglycerate + 2 H(+)</text>
        <dbReference type="Rhea" id="RHEA:36631"/>
        <dbReference type="ChEBI" id="CHEBI:15378"/>
        <dbReference type="ChEBI" id="CHEBI:15379"/>
        <dbReference type="ChEBI" id="CHEBI:57870"/>
        <dbReference type="ChEBI" id="CHEBI:58033"/>
        <dbReference type="ChEBI" id="CHEBI:58272"/>
    </reaction>
</comment>
<comment type="cofactor">
    <cofactor evidence="1">
        <name>Mg(2+)</name>
        <dbReference type="ChEBI" id="CHEBI:18420"/>
    </cofactor>
    <text evidence="1">Binds 1 Mg(2+) ion per subunit.</text>
</comment>
<comment type="subunit">
    <text evidence="1">Heterohexadecamer of 8 large chains and 8 small chains; disulfide-linked. The disulfide link is formed within the large subunit homodimers (By similarity).</text>
</comment>
<comment type="subcellular location">
    <subcellularLocation>
        <location>Plastid</location>
        <location>Chloroplast</location>
    </subcellularLocation>
</comment>
<comment type="PTM">
    <text evidence="1">The disulfide bond which can form in the large chain dimeric partners within the hexadecamer appears to be associated with oxidative stress and protein turnover.</text>
</comment>
<comment type="miscellaneous">
    <text evidence="1">The basic functional RuBisCO is composed of a large chain homodimer in a 'head-to-tail' conformation. In form I RuBisCO this homodimer is arranged in a barrel-like tetramer with the small subunits forming a tetrameric 'cap' on each end of the 'barrel' (By similarity).</text>
</comment>
<comment type="similarity">
    <text evidence="3">Belongs to the RuBisCO large chain family. Type I subfamily.</text>
</comment>
<organism>
    <name type="scientific">Alisma plantago-aquatica</name>
    <name type="common">Common water-plantain</name>
    <dbReference type="NCBI Taxonomy" id="15000"/>
    <lineage>
        <taxon>Eukaryota</taxon>
        <taxon>Viridiplantae</taxon>
        <taxon>Streptophyta</taxon>
        <taxon>Embryophyta</taxon>
        <taxon>Tracheophyta</taxon>
        <taxon>Spermatophyta</taxon>
        <taxon>Magnoliopsida</taxon>
        <taxon>Liliopsida</taxon>
        <taxon>Alismataceae</taxon>
        <taxon>Alisma</taxon>
    </lineage>
</organism>
<feature type="chain" id="PRO_0000062348" description="Ribulose bisphosphate carboxylase large chain">
    <location>
        <begin position="1" status="less than"/>
        <end position="394" status="greater than"/>
    </location>
</feature>
<feature type="active site" description="Proton acceptor" evidence="1">
    <location>
        <position position="166"/>
    </location>
</feature>
<feature type="active site" description="Proton acceptor" evidence="1">
    <location>
        <position position="285"/>
    </location>
</feature>
<feature type="binding site" description="in homodimeric partner" evidence="1">
    <location>
        <position position="114"/>
    </location>
    <ligand>
        <name>substrate</name>
    </ligand>
</feature>
<feature type="binding site" evidence="1">
    <location>
        <position position="164"/>
    </location>
    <ligand>
        <name>substrate</name>
    </ligand>
</feature>
<feature type="binding site" evidence="1">
    <location>
        <position position="168"/>
    </location>
    <ligand>
        <name>substrate</name>
    </ligand>
</feature>
<feature type="binding site" description="via carbamate group" evidence="2">
    <location>
        <position position="192"/>
    </location>
    <ligand>
        <name>Mg(2+)</name>
        <dbReference type="ChEBI" id="CHEBI:18420"/>
    </ligand>
</feature>
<feature type="binding site" evidence="2">
    <location>
        <position position="194"/>
    </location>
    <ligand>
        <name>Mg(2+)</name>
        <dbReference type="ChEBI" id="CHEBI:18420"/>
    </ligand>
</feature>
<feature type="binding site" evidence="2">
    <location>
        <position position="195"/>
    </location>
    <ligand>
        <name>Mg(2+)</name>
        <dbReference type="ChEBI" id="CHEBI:18420"/>
    </ligand>
</feature>
<feature type="binding site" evidence="1">
    <location>
        <position position="286"/>
    </location>
    <ligand>
        <name>substrate</name>
    </ligand>
</feature>
<feature type="binding site" evidence="1">
    <location>
        <position position="318"/>
    </location>
    <ligand>
        <name>substrate</name>
    </ligand>
</feature>
<feature type="binding site" evidence="1">
    <location>
        <position position="370"/>
    </location>
    <ligand>
        <name>substrate</name>
    </ligand>
</feature>
<feature type="site" description="Transition state stabilizer" evidence="1">
    <location>
        <position position="325"/>
    </location>
</feature>
<feature type="modified residue" description="N6,N6,N6-trimethyllysine" evidence="1">
    <location>
        <position position="5"/>
    </location>
</feature>
<feature type="modified residue" description="N6-carboxylysine" evidence="2">
    <location>
        <position position="192"/>
    </location>
</feature>
<feature type="disulfide bond" description="Interchain; in linked form" evidence="1">
    <location>
        <position position="238"/>
    </location>
</feature>
<feature type="non-terminal residue">
    <location>
        <position position="1"/>
    </location>
</feature>
<feature type="non-terminal residue">
    <location>
        <position position="394"/>
    </location>
</feature>
<accession>P34767</accession>
<dbReference type="EC" id="4.1.1.39"/>
<dbReference type="EMBL" id="L08759">
    <property type="protein sequence ID" value="AAA85294.1"/>
    <property type="molecule type" value="Genomic_DNA"/>
</dbReference>
<dbReference type="SMR" id="P34767"/>
<dbReference type="GO" id="GO:0009507">
    <property type="term" value="C:chloroplast"/>
    <property type="evidence" value="ECO:0007669"/>
    <property type="project" value="UniProtKB-SubCell"/>
</dbReference>
<dbReference type="GO" id="GO:0000287">
    <property type="term" value="F:magnesium ion binding"/>
    <property type="evidence" value="ECO:0007669"/>
    <property type="project" value="InterPro"/>
</dbReference>
<dbReference type="GO" id="GO:0004497">
    <property type="term" value="F:monooxygenase activity"/>
    <property type="evidence" value="ECO:0007669"/>
    <property type="project" value="UniProtKB-KW"/>
</dbReference>
<dbReference type="GO" id="GO:0016984">
    <property type="term" value="F:ribulose-bisphosphate carboxylase activity"/>
    <property type="evidence" value="ECO:0007669"/>
    <property type="project" value="UniProtKB-EC"/>
</dbReference>
<dbReference type="GO" id="GO:0009853">
    <property type="term" value="P:photorespiration"/>
    <property type="evidence" value="ECO:0007669"/>
    <property type="project" value="UniProtKB-KW"/>
</dbReference>
<dbReference type="GO" id="GO:0019253">
    <property type="term" value="P:reductive pentose-phosphate cycle"/>
    <property type="evidence" value="ECO:0007669"/>
    <property type="project" value="UniProtKB-KW"/>
</dbReference>
<dbReference type="FunFam" id="3.20.20.110:FF:000003">
    <property type="entry name" value="Ribulose bisphosphate carboxylase large chain"/>
    <property type="match status" value="1"/>
</dbReference>
<dbReference type="FunFam" id="3.30.70.150:FF:000001">
    <property type="entry name" value="Ribulose bisphosphate carboxylase large chain"/>
    <property type="match status" value="1"/>
</dbReference>
<dbReference type="Gene3D" id="3.20.20.110">
    <property type="entry name" value="Ribulose bisphosphate carboxylase, large subunit, C-terminal domain"/>
    <property type="match status" value="1"/>
</dbReference>
<dbReference type="Gene3D" id="3.30.70.150">
    <property type="entry name" value="RuBisCO large subunit, N-terminal domain"/>
    <property type="match status" value="1"/>
</dbReference>
<dbReference type="InterPro" id="IPR033966">
    <property type="entry name" value="RuBisCO"/>
</dbReference>
<dbReference type="InterPro" id="IPR020878">
    <property type="entry name" value="RuBisCo_large_chain_AS"/>
</dbReference>
<dbReference type="InterPro" id="IPR000685">
    <property type="entry name" value="RuBisCO_lsu_C"/>
</dbReference>
<dbReference type="InterPro" id="IPR036376">
    <property type="entry name" value="RuBisCO_lsu_C_sf"/>
</dbReference>
<dbReference type="InterPro" id="IPR017443">
    <property type="entry name" value="RuBisCO_lsu_fd_N"/>
</dbReference>
<dbReference type="InterPro" id="IPR036422">
    <property type="entry name" value="RuBisCO_lsu_N_sf"/>
</dbReference>
<dbReference type="NCBIfam" id="NF003252">
    <property type="entry name" value="PRK04208.1"/>
    <property type="match status" value="1"/>
</dbReference>
<dbReference type="PANTHER" id="PTHR42704">
    <property type="entry name" value="RIBULOSE BISPHOSPHATE CARBOXYLASE"/>
    <property type="match status" value="1"/>
</dbReference>
<dbReference type="PANTHER" id="PTHR42704:SF15">
    <property type="entry name" value="RIBULOSE BISPHOSPHATE CARBOXYLASE LARGE CHAIN"/>
    <property type="match status" value="1"/>
</dbReference>
<dbReference type="Pfam" id="PF00016">
    <property type="entry name" value="RuBisCO_large"/>
    <property type="match status" value="1"/>
</dbReference>
<dbReference type="Pfam" id="PF02788">
    <property type="entry name" value="RuBisCO_large_N"/>
    <property type="match status" value="1"/>
</dbReference>
<dbReference type="SFLD" id="SFLDS00014">
    <property type="entry name" value="RuBisCO"/>
    <property type="match status" value="1"/>
</dbReference>
<dbReference type="SFLD" id="SFLDG00301">
    <property type="entry name" value="RuBisCO-like_proteins"/>
    <property type="match status" value="1"/>
</dbReference>
<dbReference type="SUPFAM" id="SSF51649">
    <property type="entry name" value="RuBisCo, C-terminal domain"/>
    <property type="match status" value="1"/>
</dbReference>
<dbReference type="SUPFAM" id="SSF54966">
    <property type="entry name" value="RuBisCO, large subunit, small (N-terminal) domain"/>
    <property type="match status" value="1"/>
</dbReference>
<dbReference type="PROSITE" id="PS00157">
    <property type="entry name" value="RUBISCO_LARGE"/>
    <property type="match status" value="1"/>
</dbReference>
<gene>
    <name type="primary">rbcL</name>
</gene>
<keyword id="KW-0113">Calvin cycle</keyword>
<keyword id="KW-0120">Carbon dioxide fixation</keyword>
<keyword id="KW-0150">Chloroplast</keyword>
<keyword id="KW-1015">Disulfide bond</keyword>
<keyword id="KW-0456">Lyase</keyword>
<keyword id="KW-0460">Magnesium</keyword>
<keyword id="KW-0479">Metal-binding</keyword>
<keyword id="KW-0488">Methylation</keyword>
<keyword id="KW-0503">Monooxygenase</keyword>
<keyword id="KW-0560">Oxidoreductase</keyword>
<keyword id="KW-0601">Photorespiration</keyword>
<keyword id="KW-0602">Photosynthesis</keyword>
<keyword id="KW-0934">Plastid</keyword>